<proteinExistence type="inferred from homology"/>
<dbReference type="EC" id="4.2.1.59" evidence="1"/>
<dbReference type="EMBL" id="CP000744">
    <property type="protein sequence ID" value="ABR82636.1"/>
    <property type="molecule type" value="Genomic_DNA"/>
</dbReference>
<dbReference type="RefSeq" id="WP_003092375.1">
    <property type="nucleotide sequence ID" value="NC_009656.1"/>
</dbReference>
<dbReference type="SMR" id="A6V1E3"/>
<dbReference type="GeneID" id="77219874"/>
<dbReference type="KEGG" id="pap:PSPA7_1494"/>
<dbReference type="HOGENOM" id="CLU_078912_1_0_6"/>
<dbReference type="Proteomes" id="UP000001582">
    <property type="component" value="Chromosome"/>
</dbReference>
<dbReference type="GO" id="GO:0005737">
    <property type="term" value="C:cytoplasm"/>
    <property type="evidence" value="ECO:0007669"/>
    <property type="project" value="UniProtKB-SubCell"/>
</dbReference>
<dbReference type="GO" id="GO:0016020">
    <property type="term" value="C:membrane"/>
    <property type="evidence" value="ECO:0007669"/>
    <property type="project" value="GOC"/>
</dbReference>
<dbReference type="GO" id="GO:0019171">
    <property type="term" value="F:(3R)-hydroxyacyl-[acyl-carrier-protein] dehydratase activity"/>
    <property type="evidence" value="ECO:0007669"/>
    <property type="project" value="UniProtKB-EC"/>
</dbReference>
<dbReference type="GO" id="GO:0006633">
    <property type="term" value="P:fatty acid biosynthetic process"/>
    <property type="evidence" value="ECO:0007669"/>
    <property type="project" value="UniProtKB-UniRule"/>
</dbReference>
<dbReference type="GO" id="GO:0009245">
    <property type="term" value="P:lipid A biosynthetic process"/>
    <property type="evidence" value="ECO:0007669"/>
    <property type="project" value="UniProtKB-UniRule"/>
</dbReference>
<dbReference type="CDD" id="cd01288">
    <property type="entry name" value="FabZ"/>
    <property type="match status" value="1"/>
</dbReference>
<dbReference type="FunFam" id="3.10.129.10:FF:000001">
    <property type="entry name" value="3-hydroxyacyl-[acyl-carrier-protein] dehydratase FabZ"/>
    <property type="match status" value="1"/>
</dbReference>
<dbReference type="Gene3D" id="3.10.129.10">
    <property type="entry name" value="Hotdog Thioesterase"/>
    <property type="match status" value="1"/>
</dbReference>
<dbReference type="HAMAP" id="MF_00406">
    <property type="entry name" value="FabZ"/>
    <property type="match status" value="1"/>
</dbReference>
<dbReference type="InterPro" id="IPR013114">
    <property type="entry name" value="FabA_FabZ"/>
</dbReference>
<dbReference type="InterPro" id="IPR010084">
    <property type="entry name" value="FabZ"/>
</dbReference>
<dbReference type="InterPro" id="IPR029069">
    <property type="entry name" value="HotDog_dom_sf"/>
</dbReference>
<dbReference type="NCBIfam" id="TIGR01750">
    <property type="entry name" value="fabZ"/>
    <property type="match status" value="1"/>
</dbReference>
<dbReference type="NCBIfam" id="NF000582">
    <property type="entry name" value="PRK00006.1"/>
    <property type="match status" value="1"/>
</dbReference>
<dbReference type="PANTHER" id="PTHR30272">
    <property type="entry name" value="3-HYDROXYACYL-[ACYL-CARRIER-PROTEIN] DEHYDRATASE"/>
    <property type="match status" value="1"/>
</dbReference>
<dbReference type="PANTHER" id="PTHR30272:SF1">
    <property type="entry name" value="3-HYDROXYACYL-[ACYL-CARRIER-PROTEIN] DEHYDRATASE"/>
    <property type="match status" value="1"/>
</dbReference>
<dbReference type="Pfam" id="PF07977">
    <property type="entry name" value="FabA"/>
    <property type="match status" value="1"/>
</dbReference>
<dbReference type="SUPFAM" id="SSF54637">
    <property type="entry name" value="Thioesterase/thiol ester dehydrase-isomerase"/>
    <property type="match status" value="1"/>
</dbReference>
<name>FABZ_PSEP7</name>
<evidence type="ECO:0000255" key="1">
    <source>
        <dbReference type="HAMAP-Rule" id="MF_00406"/>
    </source>
</evidence>
<protein>
    <recommendedName>
        <fullName evidence="1">3-hydroxyacyl-[acyl-carrier-protein] dehydratase FabZ</fullName>
        <ecNumber evidence="1">4.2.1.59</ecNumber>
    </recommendedName>
    <alternativeName>
        <fullName evidence="1">(3R)-hydroxymyristoyl-[acyl-carrier-protein] dehydratase</fullName>
        <shortName evidence="1">(3R)-hydroxymyristoyl-ACP dehydrase</shortName>
    </alternativeName>
    <alternativeName>
        <fullName evidence="1">Beta-hydroxyacyl-ACP dehydratase</fullName>
    </alternativeName>
</protein>
<accession>A6V1E3</accession>
<feature type="chain" id="PRO_1000049852" description="3-hydroxyacyl-[acyl-carrier-protein] dehydratase FabZ">
    <location>
        <begin position="1"/>
        <end position="146"/>
    </location>
</feature>
<feature type="active site" evidence="1">
    <location>
        <position position="49"/>
    </location>
</feature>
<keyword id="KW-0963">Cytoplasm</keyword>
<keyword id="KW-0441">Lipid A biosynthesis</keyword>
<keyword id="KW-0444">Lipid biosynthesis</keyword>
<keyword id="KW-0443">Lipid metabolism</keyword>
<keyword id="KW-0456">Lyase</keyword>
<organism>
    <name type="scientific">Pseudomonas paraeruginosa (strain DSM 24068 / PA7)</name>
    <name type="common">Pseudomonas aeruginosa (strain PA7)</name>
    <dbReference type="NCBI Taxonomy" id="381754"/>
    <lineage>
        <taxon>Bacteria</taxon>
        <taxon>Pseudomonadati</taxon>
        <taxon>Pseudomonadota</taxon>
        <taxon>Gammaproteobacteria</taxon>
        <taxon>Pseudomonadales</taxon>
        <taxon>Pseudomonadaceae</taxon>
        <taxon>Pseudomonas</taxon>
        <taxon>Pseudomonas paraeruginosa</taxon>
    </lineage>
</organism>
<comment type="function">
    <text evidence="1">Involved in unsaturated fatty acids biosynthesis. Catalyzes the dehydration of short chain beta-hydroxyacyl-ACPs and long chain saturated and unsaturated beta-hydroxyacyl-ACPs.</text>
</comment>
<comment type="catalytic activity">
    <reaction evidence="1">
        <text>a (3R)-hydroxyacyl-[ACP] = a (2E)-enoyl-[ACP] + H2O</text>
        <dbReference type="Rhea" id="RHEA:13097"/>
        <dbReference type="Rhea" id="RHEA-COMP:9925"/>
        <dbReference type="Rhea" id="RHEA-COMP:9945"/>
        <dbReference type="ChEBI" id="CHEBI:15377"/>
        <dbReference type="ChEBI" id="CHEBI:78784"/>
        <dbReference type="ChEBI" id="CHEBI:78827"/>
        <dbReference type="EC" id="4.2.1.59"/>
    </reaction>
</comment>
<comment type="subcellular location">
    <subcellularLocation>
        <location evidence="1">Cytoplasm</location>
    </subcellularLocation>
</comment>
<comment type="similarity">
    <text evidence="1">Belongs to the thioester dehydratase family. FabZ subfamily.</text>
</comment>
<gene>
    <name evidence="1" type="primary">fabZ</name>
    <name type="ordered locus">PSPA7_1494</name>
</gene>
<reference key="1">
    <citation type="submission" date="2007-06" db="EMBL/GenBank/DDBJ databases">
        <authorList>
            <person name="Dodson R.J."/>
            <person name="Harkins D."/>
            <person name="Paulsen I.T."/>
        </authorList>
    </citation>
    <scope>NUCLEOTIDE SEQUENCE [LARGE SCALE GENOMIC DNA]</scope>
    <source>
        <strain>DSM 24068 / PA7</strain>
    </source>
</reference>
<sequence>MMDINEIREYLPHRYPFLLVDRVVELDIEGKRIRAYKNVSINEPFFNGHFPEHPIMPGVLIIEAMAQAAGILGFKMLDVKPADGTLYYFVGSDKLRFRQPVLPGDQLQLHAKFISVKRSIWKFDCHATVDDKPVCSAEIICAERKL</sequence>